<name>NTA_AVIAU</name>
<dbReference type="PDB" id="5WLX">
    <property type="method" value="NMR"/>
    <property type="chains" value="A=1-36"/>
</dbReference>
<dbReference type="PDBsum" id="5WLX"/>
<dbReference type="BMRB" id="A0A3F2YLP5"/>
<dbReference type="SMR" id="A0A3F2YLP5"/>
<dbReference type="GO" id="GO:0005576">
    <property type="term" value="C:extracellular region"/>
    <property type="evidence" value="ECO:0007669"/>
    <property type="project" value="UniProtKB-SubCell"/>
</dbReference>
<dbReference type="GO" id="GO:0008200">
    <property type="term" value="F:ion channel inhibitor activity"/>
    <property type="evidence" value="ECO:0007669"/>
    <property type="project" value="InterPro"/>
</dbReference>
<dbReference type="GO" id="GO:0015459">
    <property type="term" value="F:potassium channel regulator activity"/>
    <property type="evidence" value="ECO:0007669"/>
    <property type="project" value="UniProtKB-KW"/>
</dbReference>
<dbReference type="GO" id="GO:0090729">
    <property type="term" value="F:toxin activity"/>
    <property type="evidence" value="ECO:0007669"/>
    <property type="project" value="UniProtKB-KW"/>
</dbReference>
<dbReference type="InterPro" id="IPR011696">
    <property type="entry name" value="Huwentoxin-1"/>
</dbReference>
<dbReference type="Pfam" id="PF07740">
    <property type="entry name" value="Toxin_12"/>
    <property type="match status" value="1"/>
</dbReference>
<dbReference type="SUPFAM" id="SSF57059">
    <property type="entry name" value="omega toxin-like"/>
    <property type="match status" value="1"/>
</dbReference>
<accession>A0A3F2YLP5</accession>
<organism>
    <name type="scientific">Avicularia aurantiaca</name>
    <name type="common">Yellow-banded pinktoe tarantula</name>
    <dbReference type="NCBI Taxonomy" id="2652665"/>
    <lineage>
        <taxon>Eukaryota</taxon>
        <taxon>Metazoa</taxon>
        <taxon>Ecdysozoa</taxon>
        <taxon>Arthropoda</taxon>
        <taxon>Chelicerata</taxon>
        <taxon>Arachnida</taxon>
        <taxon>Araneae</taxon>
        <taxon>Mygalomorphae</taxon>
        <taxon>Theraphosidae</taxon>
        <taxon>Avicularia</taxon>
    </lineage>
</organism>
<protein>
    <recommendedName>
        <fullName evidence="2">Kappa-theraphotoxin-Aa1a</fullName>
        <shortName evidence="2">Kappa-TRTX-Aa1a</shortName>
    </recommendedName>
</protein>
<evidence type="ECO:0000269" key="1">
    <source>
    </source>
</evidence>
<evidence type="ECO:0000303" key="2">
    <source>
    </source>
</evidence>
<evidence type="ECO:0000305" key="3"/>
<evidence type="ECO:0000305" key="4">
    <source>
    </source>
</evidence>
<evidence type="ECO:0007744" key="5">
    <source>
        <dbReference type="PDB" id="5WLX"/>
    </source>
</evidence>
<evidence type="ECO:0007829" key="6">
    <source>
        <dbReference type="PDB" id="5WLX"/>
    </source>
</evidence>
<comment type="function">
    <text evidence="1">Selective inhibitor of voltage-gated potassium channel Kv10.1/KCNH1/EAG1 (IC(50)=637 nM). It acts by shifting the voltage dependence of channel activation in a depolarising direction. It shows a 100% inhibition at saturating concentrations, shows fast on-rates and is reversible. It also slightly affects channel inactivation, when the membrane is highly depolarised (&gt;+80 mV).</text>
</comment>
<comment type="subcellular location">
    <subcellularLocation>
        <location evidence="1">Secreted</location>
    </subcellularLocation>
</comment>
<comment type="tissue specificity">
    <text evidence="4">Expressed by the venom gland.</text>
</comment>
<comment type="domain">
    <text evidence="1">The presence of a 'disulfide through disulfide knot' structurally defines this protein as a knottin.</text>
</comment>
<comment type="mass spectrometry">
    <text>Monoisotopic mass.</text>
</comment>
<comment type="pharmaceutical">
    <text evidence="4">Could be used as informative lead for the development of novel antiepileptic drugs, as well as pharmacological tool for probing Kv10.1/KCNH1/EAG1 function.</text>
</comment>
<comment type="miscellaneous">
    <text evidence="1">Weakly inhibits Nav1.2/SCN2A (IC(50)=1449 nM), Nav1.7/SCN9A (IC(50)=1528 nM), Nav1.5/SCN5A (IC(50)=7316), and Kv11.1/KCNH2/ERG1 (IC(50)=8511 nM).</text>
</comment>
<comment type="similarity">
    <text evidence="3">Belongs to the neurotoxin 10 (Hwtx-1) family.</text>
</comment>
<comment type="online information" name="Protein Spotlight">
    <link uri="https://www.proteinspotlight.org/back_issues/267/"/>
    <text>Seizure - Issue 267 of March 2024</text>
</comment>
<keyword id="KW-0002">3D-structure</keyword>
<keyword id="KW-0027">Amidation</keyword>
<keyword id="KW-0903">Direct protein sequencing</keyword>
<keyword id="KW-1015">Disulfide bond</keyword>
<keyword id="KW-0872">Ion channel impairing toxin</keyword>
<keyword id="KW-0582">Pharmaceutical</keyword>
<keyword id="KW-0632">Potassium channel impairing toxin</keyword>
<keyword id="KW-0964">Secreted</keyword>
<keyword id="KW-0800">Toxin</keyword>
<keyword id="KW-1220">Voltage-gated potassium channel impairing toxin</keyword>
<sequence>GDCHKFLGWCRGEKDPCCEHLTCHVKHGWCVWDGTI</sequence>
<reference key="1">
    <citation type="journal article" date="2018" name="Biochem. Pharmacol.">
        <title>Novel venom-derived inhibitors of the human EAG channel, a putative antiepileptic drug target.</title>
        <authorList>
            <person name="Ma L."/>
            <person name="Chin Y.K.Y."/>
            <person name="Dekan Z."/>
            <person name="Herzig V."/>
            <person name="Chow C.Y."/>
            <person name="Heighway J."/>
            <person name="Lam S.W."/>
            <person name="Guillemin G.J."/>
            <person name="Alewood P.F."/>
            <person name="King G.F."/>
        </authorList>
    </citation>
    <scope>PROTEIN SEQUENCE</scope>
    <scope>STRUCTURE BY NMR</scope>
    <scope>FUNCTION</scope>
    <scope>SYNTHESIS</scope>
    <scope>DISULFIDE BOND</scope>
    <scope>AMIDATION AT ILE-36</scope>
    <scope>SUBCELLULAR LOCATION</scope>
    <scope>MASS SPECTROMETRY</scope>
    <scope>PHARMACEUTICAL</scope>
    <source>
        <tissue>Venom</tissue>
    </source>
</reference>
<proteinExistence type="evidence at protein level"/>
<feature type="chain" id="PRO_0000448842" description="Kappa-theraphotoxin-Aa1a" evidence="1">
    <location>
        <begin position="1"/>
        <end position="36"/>
    </location>
</feature>
<feature type="modified residue" description="Isoleucine amide" evidence="1">
    <location>
        <position position="36"/>
    </location>
</feature>
<feature type="disulfide bond" evidence="1 5">
    <location>
        <begin position="3"/>
        <end position="18"/>
    </location>
</feature>
<feature type="disulfide bond" evidence="1 5">
    <location>
        <begin position="10"/>
        <end position="23"/>
    </location>
</feature>
<feature type="disulfide bond" evidence="1 5">
    <location>
        <begin position="17"/>
        <end position="30"/>
    </location>
</feature>
<feature type="turn" evidence="6">
    <location>
        <begin position="25"/>
        <end position="27"/>
    </location>
</feature>